<reference key="1">
    <citation type="submission" date="2006-08" db="EMBL/GenBank/DDBJ databases">
        <title>Complete sequence of chromosome 3 of Burkholderia cenocepacia HI2424.</title>
        <authorList>
            <person name="Copeland A."/>
            <person name="Lucas S."/>
            <person name="Lapidus A."/>
            <person name="Barry K."/>
            <person name="Detter J.C."/>
            <person name="Glavina del Rio T."/>
            <person name="Hammon N."/>
            <person name="Israni S."/>
            <person name="Pitluck S."/>
            <person name="Chain P."/>
            <person name="Malfatti S."/>
            <person name="Shin M."/>
            <person name="Vergez L."/>
            <person name="Schmutz J."/>
            <person name="Larimer F."/>
            <person name="Land M."/>
            <person name="Hauser L."/>
            <person name="Kyrpides N."/>
            <person name="Kim E."/>
            <person name="LiPuma J.J."/>
            <person name="Gonzalez C.F."/>
            <person name="Konstantinidis K."/>
            <person name="Tiedje J.M."/>
            <person name="Richardson P."/>
        </authorList>
    </citation>
    <scope>NUCLEOTIDE SEQUENCE [LARGE SCALE GENOMIC DNA]</scope>
    <source>
        <strain>HI2424</strain>
    </source>
</reference>
<feature type="chain" id="PRO_0000277674" description="Xylose import ATP-binding protein XylG">
    <location>
        <begin position="1"/>
        <end position="519"/>
    </location>
</feature>
<feature type="domain" description="ABC transporter 1" evidence="1">
    <location>
        <begin position="6"/>
        <end position="245"/>
    </location>
</feature>
<feature type="domain" description="ABC transporter 2" evidence="1">
    <location>
        <begin position="262"/>
        <end position="507"/>
    </location>
</feature>
<feature type="binding site" evidence="1">
    <location>
        <begin position="38"/>
        <end position="45"/>
    </location>
    <ligand>
        <name>ATP</name>
        <dbReference type="ChEBI" id="CHEBI:30616"/>
    </ligand>
</feature>
<protein>
    <recommendedName>
        <fullName evidence="1">Xylose import ATP-binding protein XylG</fullName>
        <ecNumber evidence="1">7.5.2.10</ecNumber>
    </recommendedName>
</protein>
<keyword id="KW-0067">ATP-binding</keyword>
<keyword id="KW-0997">Cell inner membrane</keyword>
<keyword id="KW-1003">Cell membrane</keyword>
<keyword id="KW-0472">Membrane</keyword>
<keyword id="KW-0547">Nucleotide-binding</keyword>
<keyword id="KW-0677">Repeat</keyword>
<keyword id="KW-0762">Sugar transport</keyword>
<keyword id="KW-1278">Translocase</keyword>
<keyword id="KW-0813">Transport</keyword>
<evidence type="ECO:0000255" key="1">
    <source>
        <dbReference type="HAMAP-Rule" id="MF_01722"/>
    </source>
</evidence>
<organism>
    <name type="scientific">Burkholderia cenocepacia (strain HI2424)</name>
    <dbReference type="NCBI Taxonomy" id="331272"/>
    <lineage>
        <taxon>Bacteria</taxon>
        <taxon>Pseudomonadati</taxon>
        <taxon>Pseudomonadota</taxon>
        <taxon>Betaproteobacteria</taxon>
        <taxon>Burkholderiales</taxon>
        <taxon>Burkholderiaceae</taxon>
        <taxon>Burkholderia</taxon>
        <taxon>Burkholderia cepacia complex</taxon>
    </lineage>
</organism>
<dbReference type="EC" id="7.5.2.10" evidence="1"/>
<dbReference type="EMBL" id="CP000460">
    <property type="protein sequence ID" value="ABK13466.1"/>
    <property type="molecule type" value="Genomic_DNA"/>
</dbReference>
<dbReference type="RefSeq" id="WP_011549895.1">
    <property type="nucleotide sequence ID" value="NC_008544.1"/>
</dbReference>
<dbReference type="SMR" id="A0KE53"/>
<dbReference type="KEGG" id="bch:Bcen2424_6737"/>
<dbReference type="HOGENOM" id="CLU_000604_92_3_4"/>
<dbReference type="GO" id="GO:0005886">
    <property type="term" value="C:plasma membrane"/>
    <property type="evidence" value="ECO:0007669"/>
    <property type="project" value="UniProtKB-SubCell"/>
</dbReference>
<dbReference type="GO" id="GO:0015614">
    <property type="term" value="F:ABC-type D-xylose transporter activity"/>
    <property type="evidence" value="ECO:0007669"/>
    <property type="project" value="UniProtKB-EC"/>
</dbReference>
<dbReference type="GO" id="GO:0005524">
    <property type="term" value="F:ATP binding"/>
    <property type="evidence" value="ECO:0007669"/>
    <property type="project" value="UniProtKB-KW"/>
</dbReference>
<dbReference type="GO" id="GO:0016887">
    <property type="term" value="F:ATP hydrolysis activity"/>
    <property type="evidence" value="ECO:0007669"/>
    <property type="project" value="InterPro"/>
</dbReference>
<dbReference type="CDD" id="cd03216">
    <property type="entry name" value="ABC_Carb_Monos_I"/>
    <property type="match status" value="1"/>
</dbReference>
<dbReference type="CDD" id="cd03215">
    <property type="entry name" value="ABC_Carb_Monos_II"/>
    <property type="match status" value="1"/>
</dbReference>
<dbReference type="FunFam" id="3.40.50.300:FF:000127">
    <property type="entry name" value="Ribose import ATP-binding protein RbsA"/>
    <property type="match status" value="1"/>
</dbReference>
<dbReference type="Gene3D" id="3.40.50.300">
    <property type="entry name" value="P-loop containing nucleotide triphosphate hydrolases"/>
    <property type="match status" value="2"/>
</dbReference>
<dbReference type="InterPro" id="IPR003593">
    <property type="entry name" value="AAA+_ATPase"/>
</dbReference>
<dbReference type="InterPro" id="IPR050107">
    <property type="entry name" value="ABC_carbohydrate_import_ATPase"/>
</dbReference>
<dbReference type="InterPro" id="IPR003439">
    <property type="entry name" value="ABC_transporter-like_ATP-bd"/>
</dbReference>
<dbReference type="InterPro" id="IPR017871">
    <property type="entry name" value="ABC_transporter-like_CS"/>
</dbReference>
<dbReference type="InterPro" id="IPR013455">
    <property type="entry name" value="ABC_transptr_XylG"/>
</dbReference>
<dbReference type="InterPro" id="IPR027417">
    <property type="entry name" value="P-loop_NTPase"/>
</dbReference>
<dbReference type="NCBIfam" id="NF010069">
    <property type="entry name" value="PRK13549.1"/>
    <property type="match status" value="1"/>
</dbReference>
<dbReference type="NCBIfam" id="TIGR02633">
    <property type="entry name" value="xylG"/>
    <property type="match status" value="1"/>
</dbReference>
<dbReference type="PANTHER" id="PTHR43790">
    <property type="entry name" value="CARBOHYDRATE TRANSPORT ATP-BINDING PROTEIN MG119-RELATED"/>
    <property type="match status" value="1"/>
</dbReference>
<dbReference type="PANTHER" id="PTHR43790:SF1">
    <property type="entry name" value="XYLOSE IMPORT ATP-BINDING PROTEIN XYLG"/>
    <property type="match status" value="1"/>
</dbReference>
<dbReference type="Pfam" id="PF00005">
    <property type="entry name" value="ABC_tran"/>
    <property type="match status" value="2"/>
</dbReference>
<dbReference type="SMART" id="SM00382">
    <property type="entry name" value="AAA"/>
    <property type="match status" value="2"/>
</dbReference>
<dbReference type="SUPFAM" id="SSF52540">
    <property type="entry name" value="P-loop containing nucleoside triphosphate hydrolases"/>
    <property type="match status" value="2"/>
</dbReference>
<dbReference type="PROSITE" id="PS00211">
    <property type="entry name" value="ABC_TRANSPORTER_1"/>
    <property type="match status" value="1"/>
</dbReference>
<dbReference type="PROSITE" id="PS50893">
    <property type="entry name" value="ABC_TRANSPORTER_2"/>
    <property type="match status" value="2"/>
</dbReference>
<dbReference type="PROSITE" id="PS51280">
    <property type="entry name" value="XYLG"/>
    <property type="match status" value="1"/>
</dbReference>
<sequence>MTEPLLTMRGIVKAFDGVKALDGIDLTVRPGECVGLCGENGAGKSTLMKVLSGVYPHGTWDGEIRWEGAPLAASGVRDTERAGIVIIHQELMLVPELSVAENIFLGNEITLPGGRMNFAAMVQRAEELLRELRIDTINVAQPVMNYGGGHQQLIEIAKALNKHAKLLILDEPSSSLSASETRILLDIVRDLKRRGVACVYISHKLDEVAAVCDTVTVIRDGRHVATEPMATLTTDRIIAMMVGREIRDLYPREPHEIGDVVLDVRHVTCRDVTNARRKRVDDVSFSVRRGEIVGVAGLVGAGRTELMQAIFGAYPGACTASVTMNGKPLSIRSPADAIRAGIAMVPEDRKRHGIVPQLGVGHNITLAVLRRFAARGRIDAAAELDTIRTEMQRLSVRAAHPFLSIASLSGGNQQKAVLAKMLLTEPQVLILDEPTRGVDVGAKAEIYRLIFALAQRGVALIVVSSELPEVLGLADRVLVIGEGELRGDFVNQGLTQEQILGAALKPARLAAEPTAASAT</sequence>
<proteinExistence type="inferred from homology"/>
<gene>
    <name evidence="1" type="primary">xylG</name>
    <name type="ordered locus">Bcen2424_6737</name>
</gene>
<accession>A0KE53</accession>
<comment type="function">
    <text evidence="1">Part of the ABC transporter complex XylFGH involved in xylose import. Responsible for energy coupling to the transport system.</text>
</comment>
<comment type="catalytic activity">
    <reaction evidence="1">
        <text>D-xylose(out) + ATP + H2O = D-xylose(in) + ADP + phosphate + H(+)</text>
        <dbReference type="Rhea" id="RHEA:29899"/>
        <dbReference type="ChEBI" id="CHEBI:15377"/>
        <dbReference type="ChEBI" id="CHEBI:15378"/>
        <dbReference type="ChEBI" id="CHEBI:30616"/>
        <dbReference type="ChEBI" id="CHEBI:43474"/>
        <dbReference type="ChEBI" id="CHEBI:53455"/>
        <dbReference type="ChEBI" id="CHEBI:456216"/>
        <dbReference type="EC" id="7.5.2.10"/>
    </reaction>
</comment>
<comment type="subunit">
    <text evidence="1">The complex is composed of two ATP-binding proteins (XylG), two transmembrane proteins (XylH) and a solute-binding protein (XylF).</text>
</comment>
<comment type="subcellular location">
    <subcellularLocation>
        <location evidence="1">Cell inner membrane</location>
        <topology evidence="1">Peripheral membrane protein</topology>
    </subcellularLocation>
</comment>
<comment type="similarity">
    <text evidence="1">Belongs to the ABC transporter superfamily. Xylose importer (TC 3.A.1.2.4) family.</text>
</comment>
<name>XYLG_BURCH</name>